<evidence type="ECO:0000255" key="1">
    <source>
        <dbReference type="PROSITE-ProRule" id="PRU00978"/>
    </source>
</evidence>
<evidence type="ECO:0000256" key="2">
    <source>
        <dbReference type="SAM" id="MobiDB-lite"/>
    </source>
</evidence>
<evidence type="ECO:0000269" key="3">
    <source>
    </source>
</evidence>
<evidence type="ECO:0000303" key="4">
    <source>
    </source>
</evidence>
<evidence type="ECO:0000305" key="5"/>
<dbReference type="EMBL" id="LSBH01000002">
    <property type="protein sequence ID" value="OAQ83764.1"/>
    <property type="molecule type" value="Genomic_DNA"/>
</dbReference>
<dbReference type="SMR" id="A0A179H0U5"/>
<dbReference type="Proteomes" id="UP000078240">
    <property type="component" value="Unassembled WGS sequence"/>
</dbReference>
<dbReference type="GO" id="GO:0005634">
    <property type="term" value="C:nucleus"/>
    <property type="evidence" value="ECO:0007669"/>
    <property type="project" value="UniProtKB-SubCell"/>
</dbReference>
<dbReference type="GO" id="GO:0003677">
    <property type="term" value="F:DNA binding"/>
    <property type="evidence" value="ECO:0007669"/>
    <property type="project" value="UniProtKB-KW"/>
</dbReference>
<dbReference type="GO" id="GO:0003700">
    <property type="term" value="F:DNA-binding transcription factor activity"/>
    <property type="evidence" value="ECO:0007669"/>
    <property type="project" value="InterPro"/>
</dbReference>
<dbReference type="CDD" id="cd14688">
    <property type="entry name" value="bZIP_YAP"/>
    <property type="match status" value="1"/>
</dbReference>
<dbReference type="Gene3D" id="1.20.5.170">
    <property type="match status" value="1"/>
</dbReference>
<dbReference type="InterPro" id="IPR046347">
    <property type="entry name" value="bZIP_sf"/>
</dbReference>
<dbReference type="InterPro" id="IPR052635">
    <property type="entry name" value="Sec_Metab_Biosynth_Reg"/>
</dbReference>
<dbReference type="PANTHER" id="PTHR39607:SF1">
    <property type="entry name" value="B-ZIP TRANSCRIPTION FACTOR (EUROFUNG)"/>
    <property type="match status" value="1"/>
</dbReference>
<dbReference type="PANTHER" id="PTHR39607">
    <property type="entry name" value="XANTHOCILLIN BIOSYNTHESIS CLUSTER TRANSCRIPTION FACTOR XANC-RELATED"/>
    <property type="match status" value="1"/>
</dbReference>
<dbReference type="SUPFAM" id="SSF57959">
    <property type="entry name" value="Leucine zipper domain"/>
    <property type="match status" value="1"/>
</dbReference>
<name>LCSF_PURLI</name>
<sequence length="552" mass="60064">MAPASSNPGPYSLPDKDEVQLSAEDDWTRVKDRKEKKRIQNRVAQRSYRSRMKARLGELQSRLQAHEEQKAKEEAERCDPSPPSPPSSSATGLHLHTTPPSGNNAGANDTEPSSINSASPPTPPDVVGDLDPSQHAKAIDQFSHQMDMAGNDDSQWFLDSTSLLQHGDTSSYIQPSVPTPPVSLSQCPPMPAYMPEGPRNPNDGPASLSQSILQDCLRFQIQLLAKINNPSEATSTTHKEEGSAAKSPGALQQSHWSSCATNPAAAAQNMMPSTNMARGNSFSVLPADFHNLDDMMELTSTGDLPNATWRPSQQFSGPETTPRSHNAENPTQQQSPINDDTPSTTQHGAVPDCYNAFVAKSSAQASSLGMEERLEAAIEGLEALGFTSVDSFAEAYYSSSFDESSHLAAEQSMSRKRRLPRMLSQILDSAQSWDPWDRRGLNEEVLRTAESLLVAEGKSMDEKSLEASISGLMQATEGSSKPTPPQQNVTGMKRVLQNELPNLWPVMMALAGGNRASRQRDRSNMVLAAILILHCSSKMTKQKLLEFLDVCL</sequence>
<keyword id="KW-0238">DNA-binding</keyword>
<keyword id="KW-0539">Nucleus</keyword>
<keyword id="KW-0804">Transcription</keyword>
<keyword id="KW-0805">Transcription regulation</keyword>
<protein>
    <recommendedName>
        <fullName evidence="4">Transcription factor lcsF</fullName>
    </recommendedName>
    <alternativeName>
        <fullName evidence="4">Leucinostatins biosynthesis cluster protein F</fullName>
    </alternativeName>
</protein>
<organism>
    <name type="scientific">Purpureocillium lilacinum</name>
    <name type="common">Paecilomyces lilacinus</name>
    <dbReference type="NCBI Taxonomy" id="33203"/>
    <lineage>
        <taxon>Eukaryota</taxon>
        <taxon>Fungi</taxon>
        <taxon>Dikarya</taxon>
        <taxon>Ascomycota</taxon>
        <taxon>Pezizomycotina</taxon>
        <taxon>Sordariomycetes</taxon>
        <taxon>Hypocreomycetidae</taxon>
        <taxon>Hypocreales</taxon>
        <taxon>Ophiocordycipitaceae</taxon>
        <taxon>Purpureocillium</taxon>
    </lineage>
</organism>
<gene>
    <name evidence="4" type="primary">lcsF</name>
    <name type="ORF">VFPBJ_02531</name>
</gene>
<feature type="chain" id="PRO_0000446607" description="Transcription factor lcsF">
    <location>
        <begin position="1"/>
        <end position="552"/>
    </location>
</feature>
<feature type="domain" description="bZIP" evidence="1">
    <location>
        <begin position="31"/>
        <end position="76"/>
    </location>
</feature>
<feature type="region of interest" description="Disordered" evidence="2">
    <location>
        <begin position="1"/>
        <end position="132"/>
    </location>
</feature>
<feature type="region of interest" description="Basic motif" evidence="1">
    <location>
        <begin position="31"/>
        <end position="55"/>
    </location>
</feature>
<feature type="region of interest" description="Leucine-zipper" evidence="1">
    <location>
        <begin position="56"/>
        <end position="63"/>
    </location>
</feature>
<feature type="region of interest" description="Disordered" evidence="2">
    <location>
        <begin position="169"/>
        <end position="209"/>
    </location>
</feature>
<feature type="region of interest" description="Disordered" evidence="2">
    <location>
        <begin position="232"/>
        <end position="258"/>
    </location>
</feature>
<feature type="region of interest" description="Disordered" evidence="2">
    <location>
        <begin position="297"/>
        <end position="349"/>
    </location>
</feature>
<feature type="compositionally biased region" description="Basic and acidic residues" evidence="2">
    <location>
        <begin position="64"/>
        <end position="79"/>
    </location>
</feature>
<feature type="compositionally biased region" description="Polar residues" evidence="2">
    <location>
        <begin position="98"/>
        <end position="119"/>
    </location>
</feature>
<feature type="compositionally biased region" description="Polar residues" evidence="2">
    <location>
        <begin position="169"/>
        <end position="186"/>
    </location>
</feature>
<feature type="compositionally biased region" description="Polar residues" evidence="2">
    <location>
        <begin position="298"/>
        <end position="347"/>
    </location>
</feature>
<accession>A0A179H0U5</accession>
<comment type="function">
    <text evidence="3">Transcription factor that regulates the expression of the gene cluster that mediates the biosynthesis of the lipopeptide antibiotics leucinostatins that show extensive biological activities, including antimalarial, antiviral, antibacterial, antifungal, and antitumor activities, as well as phytotoxic (PubMed:27416025). All 20 genes in the cluster are up-regulated to some extent by lcsF, with the exception of lcsL and lcsP, which are down-regulated (PubMed:27416025).</text>
</comment>
<comment type="subcellular location">
    <subcellularLocation>
        <location evidence="5">Nucleus</location>
    </subcellularLocation>
</comment>
<comment type="similarity">
    <text evidence="5">Belongs to the bZIP family.</text>
</comment>
<proteinExistence type="inferred from homology"/>
<reference key="1">
    <citation type="journal article" date="2016" name="PLoS Pathog.">
        <title>Biosynthesis of antibiotic leucinostatins in bio-control fungus Purpureocillium lilacinum and their inhibition on phytophthora revealed by genome mining.</title>
        <authorList>
            <person name="Wang G."/>
            <person name="Liu Z."/>
            <person name="Lin R."/>
            <person name="Li E."/>
            <person name="Mao Z."/>
            <person name="Ling J."/>
            <person name="Yang Y."/>
            <person name="Yin W.B."/>
            <person name="Xie B."/>
        </authorList>
    </citation>
    <scope>NUCLEOTIDE SEQUENCE [LARGE SCALE GENOMIC DNA]</scope>
    <scope>IDENTIFICATION</scope>
    <scope>FUNCTION</scope>
    <source>
        <strain>PLBJ-1</strain>
    </source>
</reference>